<gene>
    <name type="primary">LAT2</name>
    <name type="synonym">LAB</name>
    <name type="synonym">NTAL</name>
</gene>
<feature type="chain" id="PRO_0000083337" description="Linker for activation of T-cells family member 2">
    <location>
        <begin position="1"/>
        <end position="198"/>
    </location>
</feature>
<feature type="topological domain" description="Extracellular" evidence="2">
    <location>
        <begin position="1"/>
        <end position="4"/>
    </location>
</feature>
<feature type="transmembrane region" description="Helical; Signal-anchor for type III membrane protein" evidence="2">
    <location>
        <begin position="5"/>
        <end position="24"/>
    </location>
</feature>
<feature type="topological domain" description="Cytoplasmic" evidence="2">
    <location>
        <begin position="25"/>
        <end position="198"/>
    </location>
</feature>
<feature type="modified residue" description="Phosphotyrosine" evidence="4">
    <location>
        <position position="136"/>
    </location>
</feature>
<feature type="modified residue" description="Phosphotyrosine" evidence="4">
    <location>
        <position position="155"/>
    </location>
</feature>
<feature type="modified residue" description="Phosphotyrosine" evidence="4">
    <location>
        <position position="184"/>
    </location>
</feature>
<feature type="lipid moiety-binding region" description="S-palmitoyl cysteine" evidence="4">
    <location>
        <position position="23"/>
    </location>
</feature>
<feature type="lipid moiety-binding region" description="S-palmitoyl cysteine" evidence="4">
    <location>
        <position position="26"/>
    </location>
</feature>
<feature type="mutagenesis site" description="Abolishes phosphorylation following BCR activation; when associated with A-26." evidence="3">
    <original>C</original>
    <variation>A</variation>
    <location>
        <position position="23"/>
    </location>
</feature>
<feature type="mutagenesis site" description="Abolishes phosphorylation following BCR activation; when associated with A-26." evidence="3">
    <original>C</original>
    <variation>A</variation>
    <location>
        <position position="26"/>
    </location>
</feature>
<proteinExistence type="evidence at protein level"/>
<name>NTAL_CHICK</name>
<comment type="function">
    <text evidence="3">Involved in BCR (B-cell antigen receptor)-mediated signaling in B-cells. May also be involved in FCER1 (high affinity immunoglobulin epsilon receptor)-mediated signaling in mast cells and FCGR1 (high affinity immunoglobulin gamma Fc receptor I)-mediated signaling in myeloid cells. Couples activation of these receptors and their associated kinases with distal intracellular events such as calcium mobilization through the recruitment of GRB2.</text>
</comment>
<comment type="subunit">
    <text evidence="3">When phosphorylated, interacts with GRB2.</text>
</comment>
<comment type="subcellular location">
    <subcellularLocation>
        <location evidence="1">Cell membrane</location>
        <topology evidence="1">Single-pass type III membrane protein</topology>
    </subcellularLocation>
    <text evidence="1">Present in lipid rafts.</text>
</comment>
<comment type="PTM">
    <text evidence="3">Phosphorylated on tyrosines following cross-linking of BCR; which induces the recruitment of GRB2.</text>
</comment>
<keyword id="KW-1064">Adaptive immunity</keyword>
<keyword id="KW-1003">Cell membrane</keyword>
<keyword id="KW-0391">Immunity</keyword>
<keyword id="KW-0449">Lipoprotein</keyword>
<keyword id="KW-0467">Mast cell degranulation</keyword>
<keyword id="KW-0472">Membrane</keyword>
<keyword id="KW-0564">Palmitate</keyword>
<keyword id="KW-0597">Phosphoprotein</keyword>
<keyword id="KW-1185">Reference proteome</keyword>
<keyword id="KW-0735">Signal-anchor</keyword>
<keyword id="KW-0812">Transmembrane</keyword>
<keyword id="KW-1133">Transmembrane helix</keyword>
<protein>
    <recommendedName>
        <fullName>Linker for activation of T-cells family member 2</fullName>
    </recommendedName>
    <alternativeName>
        <fullName>Linker for activation of B-cells</fullName>
    </alternativeName>
    <alternativeName>
        <fullName>Non-T-cell activation linker</fullName>
    </alternativeName>
</protein>
<organism>
    <name type="scientific">Gallus gallus</name>
    <name type="common">Chicken</name>
    <dbReference type="NCBI Taxonomy" id="9031"/>
    <lineage>
        <taxon>Eukaryota</taxon>
        <taxon>Metazoa</taxon>
        <taxon>Chordata</taxon>
        <taxon>Craniata</taxon>
        <taxon>Vertebrata</taxon>
        <taxon>Euteleostomi</taxon>
        <taxon>Archelosauria</taxon>
        <taxon>Archosauria</taxon>
        <taxon>Dinosauria</taxon>
        <taxon>Saurischia</taxon>
        <taxon>Theropoda</taxon>
        <taxon>Coelurosauria</taxon>
        <taxon>Aves</taxon>
        <taxon>Neognathae</taxon>
        <taxon>Galloanserae</taxon>
        <taxon>Galliformes</taxon>
        <taxon>Phasianidae</taxon>
        <taxon>Phasianinae</taxon>
        <taxon>Gallus</taxon>
    </lineage>
</organism>
<evidence type="ECO:0000250" key="1"/>
<evidence type="ECO:0000255" key="2"/>
<evidence type="ECO:0000269" key="3">
    <source>
    </source>
</evidence>
<evidence type="ECO:0000305" key="4">
    <source>
    </source>
</evidence>
<dbReference type="EMBL" id="AY743659">
    <property type="protein sequence ID" value="AAV36793.1"/>
    <property type="molecule type" value="mRNA"/>
</dbReference>
<dbReference type="RefSeq" id="NP_001007483.1">
    <property type="nucleotide sequence ID" value="NM_001007482.1"/>
</dbReference>
<dbReference type="SMR" id="Q5S7W5"/>
<dbReference type="FunCoup" id="Q5S7W5">
    <property type="interactions" value="45"/>
</dbReference>
<dbReference type="STRING" id="9031.ENSGALP00000046717"/>
<dbReference type="iPTMnet" id="Q5S7W5"/>
<dbReference type="PaxDb" id="9031-ENSGALP00000001985"/>
<dbReference type="GeneID" id="417489"/>
<dbReference type="KEGG" id="gga:417489"/>
<dbReference type="CTD" id="7462"/>
<dbReference type="VEuPathDB" id="HostDB:geneid_417489"/>
<dbReference type="eggNOG" id="ENOG502SH0N">
    <property type="taxonomic scope" value="Eukaryota"/>
</dbReference>
<dbReference type="HOGENOM" id="CLU_099084_0_0_1"/>
<dbReference type="InParanoid" id="Q5S7W5"/>
<dbReference type="OrthoDB" id="9447847at2759"/>
<dbReference type="PhylomeDB" id="Q5S7W5"/>
<dbReference type="PRO" id="PR:Q5S7W5"/>
<dbReference type="Proteomes" id="UP000000539">
    <property type="component" value="Unassembled WGS sequence"/>
</dbReference>
<dbReference type="GO" id="GO:0005886">
    <property type="term" value="C:plasma membrane"/>
    <property type="evidence" value="ECO:0000318"/>
    <property type="project" value="GO_Central"/>
</dbReference>
<dbReference type="GO" id="GO:0002250">
    <property type="term" value="P:adaptive immune response"/>
    <property type="evidence" value="ECO:0007669"/>
    <property type="project" value="UniProtKB-KW"/>
</dbReference>
<dbReference type="GO" id="GO:0042113">
    <property type="term" value="P:B cell activation"/>
    <property type="evidence" value="ECO:0000318"/>
    <property type="project" value="GO_Central"/>
</dbReference>
<dbReference type="GO" id="GO:0050853">
    <property type="term" value="P:B cell receptor signaling pathway"/>
    <property type="evidence" value="ECO:0000318"/>
    <property type="project" value="GO_Central"/>
</dbReference>
<dbReference type="GO" id="GO:0019722">
    <property type="term" value="P:calcium-mediated signaling"/>
    <property type="evidence" value="ECO:0000318"/>
    <property type="project" value="GO_Central"/>
</dbReference>
<dbReference type="GO" id="GO:0043303">
    <property type="term" value="P:mast cell degranulation"/>
    <property type="evidence" value="ECO:0007669"/>
    <property type="project" value="UniProtKB-KW"/>
</dbReference>
<dbReference type="InterPro" id="IPR031428">
    <property type="entry name" value="LAT2"/>
</dbReference>
<dbReference type="PANTHER" id="PTHR15646">
    <property type="entry name" value="LINKER FOR ACTIVATION OF T-CELLS FAMILY MEMBER 2"/>
    <property type="match status" value="1"/>
</dbReference>
<dbReference type="PANTHER" id="PTHR15646:SF5">
    <property type="entry name" value="LINKER FOR ACTIVATION OF T-CELLS FAMILY MEMBER 2"/>
    <property type="match status" value="1"/>
</dbReference>
<dbReference type="Pfam" id="PF15703">
    <property type="entry name" value="LAT2"/>
    <property type="match status" value="1"/>
</dbReference>
<sequence>MAQPELLWAAAGLMLLGVAVSACVRCQLYATKRGKDGSQGSRLERPQRFEVIRSCSAVTRRPERIKEPEHLARKAPEELSTSCHVGFESSAEPRYQNFLTEDCLHEDAAYVEPVPLDYYSHNRFFSPPNDEDSHSYQNVIIGDPCSSELDDAEDYENSTAIEVWKVQQAKAMLYAESQDEEPDYVNTDPTIDAVVLSK</sequence>
<reference key="1">
    <citation type="journal article" date="2004" name="Immunity">
        <title>Grb2 and the non-T cell activation linker NTAL constitute a Ca(2+)-regulating signal circuit in B lymphocytes.</title>
        <authorList>
            <person name="Stork B."/>
            <person name="Engelke M."/>
            <person name="Frey J."/>
            <person name="Horejsi V."/>
            <person name="Hamm-Baarke A."/>
            <person name="Schraven B."/>
            <person name="Kurosaki T."/>
            <person name="Wienands J."/>
        </authorList>
    </citation>
    <scope>NUCLEOTIDE SEQUENCE [MRNA]</scope>
    <scope>MUTAGENESIS OF CYS-23 AND CYS-26</scope>
    <scope>PALMITOYLATION AT CYS-23 AND CYS-26</scope>
    <scope>PHOSPHORYLATION</scope>
    <scope>INTERACTION WITH GRB2</scope>
    <scope>PHOSPHORYLATION AT TYR-136; TYR-155 AND TYR-184</scope>
    <scope>FUNCTION</scope>
</reference>
<accession>Q5S7W5</accession>